<protein>
    <recommendedName>
        <fullName evidence="1">Glycine--tRNA ligase beta subunit</fullName>
        <ecNumber evidence="1">6.1.1.14</ecNumber>
    </recommendedName>
    <alternativeName>
        <fullName evidence="1">Glycyl-tRNA synthetase beta subunit</fullName>
        <shortName evidence="1">GlyRS</shortName>
    </alternativeName>
</protein>
<feature type="chain" id="PRO_1000197164" description="Glycine--tRNA ligase beta subunit">
    <location>
        <begin position="1"/>
        <end position="689"/>
    </location>
</feature>
<sequence>MSKHTVLFELGCEELPPKSLKTLRDALQAETVKGLNEAGLNFASVEAYAAPRRLALKIVDVDAAQADTQKRFDGPAVQAAYDAEGKPTKALEGFMRGQGITVEQLSTFQAGKVEKVCYLKDVKGQSLDTLLPQILQTALDNLPIAKRMRSAASRTEFVRPVKWVVLLKDDQVIEATIQDHKAGNVTYGHRFHAPEAVTLAHANDYLAALEKAYVVANFEKRQATIQEQVKKLADEVNATAIVPADLLDEVTSLVEWPVALRATFEERYLAVPQEALITTMQDNQKYFCLINAEGKLQPYFITVSNIESKDPTQIIEGNEKVVRPRLSDAEFFFLQDQKQPLASRKEKLANMVFQAQLGTLWDKSTRIAKLAVALSSITGANPADAEKAALLAKCDLTSELVGEFPELQGIAGTYYARIEGENTEVSEALGEQYLPKFAGDVLPKTKTGTTIALSDRLDTLVGIFGIGQAPTGSKDPFALRRSAIGILRLIIENELDVTIEELVNLALQGYGDIVKDHDKTRADAVAFLEGRYRAKYEDQGVAVDVLQAVQALAPKSPLDFDKRVNAVNHFRTLPEAAALAAANKRVANILAKEATPEGSVVEANLVEDAEKALFAELQAVTPVVEPLLAAKDYTAALSKLAALRAPIDAFFDGVMVMADDAGLKANRLRLLAQLRNLFTAVADVSVLQG</sequence>
<reference key="1">
    <citation type="journal article" date="2008" name="J. Bacteriol.">
        <title>Comparative genome sequence analysis of multidrug-resistant Acinetobacter baumannii.</title>
        <authorList>
            <person name="Adams M.D."/>
            <person name="Goglin K."/>
            <person name="Molyneaux N."/>
            <person name="Hujer K.M."/>
            <person name="Lavender H."/>
            <person name="Jamison J.J."/>
            <person name="MacDonald I.J."/>
            <person name="Martin K.M."/>
            <person name="Russo T."/>
            <person name="Campagnari A.A."/>
            <person name="Hujer A.M."/>
            <person name="Bonomo R.A."/>
            <person name="Gill S.R."/>
        </authorList>
    </citation>
    <scope>NUCLEOTIDE SEQUENCE [LARGE SCALE GENOMIC DNA]</scope>
    <source>
        <strain>AB0057</strain>
    </source>
</reference>
<proteinExistence type="inferred from homology"/>
<comment type="catalytic activity">
    <reaction evidence="1">
        <text>tRNA(Gly) + glycine + ATP = glycyl-tRNA(Gly) + AMP + diphosphate</text>
        <dbReference type="Rhea" id="RHEA:16013"/>
        <dbReference type="Rhea" id="RHEA-COMP:9664"/>
        <dbReference type="Rhea" id="RHEA-COMP:9683"/>
        <dbReference type="ChEBI" id="CHEBI:30616"/>
        <dbReference type="ChEBI" id="CHEBI:33019"/>
        <dbReference type="ChEBI" id="CHEBI:57305"/>
        <dbReference type="ChEBI" id="CHEBI:78442"/>
        <dbReference type="ChEBI" id="CHEBI:78522"/>
        <dbReference type="ChEBI" id="CHEBI:456215"/>
        <dbReference type="EC" id="6.1.1.14"/>
    </reaction>
</comment>
<comment type="subunit">
    <text evidence="1">Tetramer of two alpha and two beta subunits.</text>
</comment>
<comment type="subcellular location">
    <subcellularLocation>
        <location evidence="1">Cytoplasm</location>
    </subcellularLocation>
</comment>
<comment type="similarity">
    <text evidence="1">Belongs to the class-II aminoacyl-tRNA synthetase family.</text>
</comment>
<organism>
    <name type="scientific">Acinetobacter baumannii (strain AB0057)</name>
    <dbReference type="NCBI Taxonomy" id="480119"/>
    <lineage>
        <taxon>Bacteria</taxon>
        <taxon>Pseudomonadati</taxon>
        <taxon>Pseudomonadota</taxon>
        <taxon>Gammaproteobacteria</taxon>
        <taxon>Moraxellales</taxon>
        <taxon>Moraxellaceae</taxon>
        <taxon>Acinetobacter</taxon>
        <taxon>Acinetobacter calcoaceticus/baumannii complex</taxon>
    </lineage>
</organism>
<accession>B7IA77</accession>
<evidence type="ECO:0000255" key="1">
    <source>
        <dbReference type="HAMAP-Rule" id="MF_00255"/>
    </source>
</evidence>
<keyword id="KW-0030">Aminoacyl-tRNA synthetase</keyword>
<keyword id="KW-0067">ATP-binding</keyword>
<keyword id="KW-0963">Cytoplasm</keyword>
<keyword id="KW-0436">Ligase</keyword>
<keyword id="KW-0547">Nucleotide-binding</keyword>
<keyword id="KW-0648">Protein biosynthesis</keyword>
<dbReference type="EC" id="6.1.1.14" evidence="1"/>
<dbReference type="EMBL" id="CP001182">
    <property type="protein sequence ID" value="ACJ42935.1"/>
    <property type="molecule type" value="Genomic_DNA"/>
</dbReference>
<dbReference type="RefSeq" id="WP_000033906.1">
    <property type="nucleotide sequence ID" value="NC_011586.2"/>
</dbReference>
<dbReference type="SMR" id="B7IA77"/>
<dbReference type="KEGG" id="abn:AB57_3572"/>
<dbReference type="HOGENOM" id="CLU_007220_2_2_6"/>
<dbReference type="Proteomes" id="UP000007094">
    <property type="component" value="Chromosome"/>
</dbReference>
<dbReference type="GO" id="GO:0005829">
    <property type="term" value="C:cytosol"/>
    <property type="evidence" value="ECO:0007669"/>
    <property type="project" value="TreeGrafter"/>
</dbReference>
<dbReference type="GO" id="GO:0004814">
    <property type="term" value="F:arginine-tRNA ligase activity"/>
    <property type="evidence" value="ECO:0007669"/>
    <property type="project" value="InterPro"/>
</dbReference>
<dbReference type="GO" id="GO:0005524">
    <property type="term" value="F:ATP binding"/>
    <property type="evidence" value="ECO:0007669"/>
    <property type="project" value="UniProtKB-UniRule"/>
</dbReference>
<dbReference type="GO" id="GO:0004820">
    <property type="term" value="F:glycine-tRNA ligase activity"/>
    <property type="evidence" value="ECO:0007669"/>
    <property type="project" value="UniProtKB-UniRule"/>
</dbReference>
<dbReference type="GO" id="GO:0006420">
    <property type="term" value="P:arginyl-tRNA aminoacylation"/>
    <property type="evidence" value="ECO:0007669"/>
    <property type="project" value="InterPro"/>
</dbReference>
<dbReference type="GO" id="GO:0006426">
    <property type="term" value="P:glycyl-tRNA aminoacylation"/>
    <property type="evidence" value="ECO:0007669"/>
    <property type="project" value="UniProtKB-UniRule"/>
</dbReference>
<dbReference type="HAMAP" id="MF_00255">
    <property type="entry name" value="Gly_tRNA_synth_beta"/>
    <property type="match status" value="1"/>
</dbReference>
<dbReference type="InterPro" id="IPR008909">
    <property type="entry name" value="DALR_anticod-bd"/>
</dbReference>
<dbReference type="InterPro" id="IPR015944">
    <property type="entry name" value="Gly-tRNA-synth_bsu"/>
</dbReference>
<dbReference type="InterPro" id="IPR006194">
    <property type="entry name" value="Gly-tRNA-synth_heterodimer"/>
</dbReference>
<dbReference type="NCBIfam" id="TIGR00211">
    <property type="entry name" value="glyS"/>
    <property type="match status" value="1"/>
</dbReference>
<dbReference type="PANTHER" id="PTHR30075:SF2">
    <property type="entry name" value="GLYCINE--TRNA LIGASE, CHLOROPLASTIC_MITOCHONDRIAL 2"/>
    <property type="match status" value="1"/>
</dbReference>
<dbReference type="PANTHER" id="PTHR30075">
    <property type="entry name" value="GLYCYL-TRNA SYNTHETASE"/>
    <property type="match status" value="1"/>
</dbReference>
<dbReference type="Pfam" id="PF05746">
    <property type="entry name" value="DALR_1"/>
    <property type="match status" value="1"/>
</dbReference>
<dbReference type="Pfam" id="PF02092">
    <property type="entry name" value="tRNA_synt_2f"/>
    <property type="match status" value="1"/>
</dbReference>
<dbReference type="PRINTS" id="PR01045">
    <property type="entry name" value="TRNASYNTHGB"/>
</dbReference>
<dbReference type="SUPFAM" id="SSF109604">
    <property type="entry name" value="HD-domain/PDEase-like"/>
    <property type="match status" value="1"/>
</dbReference>
<dbReference type="PROSITE" id="PS50861">
    <property type="entry name" value="AA_TRNA_LIGASE_II_GLYAB"/>
    <property type="match status" value="1"/>
</dbReference>
<name>SYGB_ACIB5</name>
<gene>
    <name evidence="1" type="primary">glyS</name>
    <name type="ordered locus">AB57_3572</name>
</gene>